<gene>
    <name evidence="1" type="primary">dnaK</name>
    <name type="ordered locus">RPC_0329</name>
</gene>
<sequence>MGKVIGIDLGTTNSCVAVMDGKAPKVIENAEGMRTTPSIVAFSDDGERLVGQPAKRQAVTNPERTFFAVKRLVGRRYDDPMVEKDKKLVPYKIVKASNGDAWVEADAKTYSPSQVSAFILQKMKETAEAHLGAKVDQAVITVPAYFNDAQRQATKDAGKIAGLEVLRIINEPTAAALAYGLDKAKAGVIAVYDLGGGTFDVSILEIGDGVFEVKSTNGDTFLGGEDFDMRLVSYLADEFQKEQGINLRNDKLALQRLKEAAEKAKIELSSTTQTEINLPFITADQSGPKHLTMKLTRAKFEALVDDLVQKTIEPCRKALKDAGLTAGEIGEVVLVGGMTRMPKVQEVVKQLFGKEPHKGVNPDEVVAIGAAIQAGVLQGDVKDVLLLDVTPLSLGIETLGGVFTRIIERNTTIPTKKSQVFSTAEDNQNAVTIRVFQGEREMAADNKILGQFDLMGIPPSPRGMPQIEVTFDIDANGIVNVSARDKATGKEQQIRIQASGGLSEADINKMVKDAEINAAEDKKRREAVDAKNHADALVHTTEKALAEHGAKVEEGERRAIEDALGDLREALKGDDAEAIKAKSNTLAQASMKLGEAMYKQQAEADAAKDAAKDDVVDAEFTEVDDDKPKKSA</sequence>
<comment type="function">
    <text evidence="1">Acts as a chaperone.</text>
</comment>
<comment type="induction">
    <text evidence="1">By stress conditions e.g. heat shock.</text>
</comment>
<comment type="similarity">
    <text evidence="1">Belongs to the heat shock protein 70 family.</text>
</comment>
<reference key="1">
    <citation type="submission" date="2006-03" db="EMBL/GenBank/DDBJ databases">
        <title>Complete sequence of Rhodopseudomonas palustris BisB18.</title>
        <authorList>
            <consortium name="US DOE Joint Genome Institute"/>
            <person name="Copeland A."/>
            <person name="Lucas S."/>
            <person name="Lapidus A."/>
            <person name="Barry K."/>
            <person name="Detter J.C."/>
            <person name="Glavina del Rio T."/>
            <person name="Hammon N."/>
            <person name="Israni S."/>
            <person name="Dalin E."/>
            <person name="Tice H."/>
            <person name="Pitluck S."/>
            <person name="Chain P."/>
            <person name="Malfatti S."/>
            <person name="Shin M."/>
            <person name="Vergez L."/>
            <person name="Schmutz J."/>
            <person name="Larimer F."/>
            <person name="Land M."/>
            <person name="Hauser L."/>
            <person name="Pelletier D.A."/>
            <person name="Kyrpides N."/>
            <person name="Anderson I."/>
            <person name="Oda Y."/>
            <person name="Harwood C.S."/>
            <person name="Richardson P."/>
        </authorList>
    </citation>
    <scope>NUCLEOTIDE SEQUENCE [LARGE SCALE GENOMIC DNA]</scope>
    <source>
        <strain>BisB18</strain>
    </source>
</reference>
<feature type="chain" id="PRO_1000059645" description="Chaperone protein DnaK">
    <location>
        <begin position="1"/>
        <end position="632"/>
    </location>
</feature>
<feature type="modified residue" description="Phosphothreonine; by autocatalysis" evidence="1">
    <location>
        <position position="198"/>
    </location>
</feature>
<dbReference type="EMBL" id="CP000301">
    <property type="protein sequence ID" value="ABD85904.1"/>
    <property type="molecule type" value="Genomic_DNA"/>
</dbReference>
<dbReference type="SMR" id="Q21CI2"/>
<dbReference type="STRING" id="316056.RPC_0329"/>
<dbReference type="KEGG" id="rpc:RPC_0329"/>
<dbReference type="eggNOG" id="COG0443">
    <property type="taxonomic scope" value="Bacteria"/>
</dbReference>
<dbReference type="HOGENOM" id="CLU_005965_2_1_5"/>
<dbReference type="OrthoDB" id="9766019at2"/>
<dbReference type="GO" id="GO:0005524">
    <property type="term" value="F:ATP binding"/>
    <property type="evidence" value="ECO:0007669"/>
    <property type="project" value="UniProtKB-UniRule"/>
</dbReference>
<dbReference type="GO" id="GO:0140662">
    <property type="term" value="F:ATP-dependent protein folding chaperone"/>
    <property type="evidence" value="ECO:0007669"/>
    <property type="project" value="InterPro"/>
</dbReference>
<dbReference type="GO" id="GO:0051082">
    <property type="term" value="F:unfolded protein binding"/>
    <property type="evidence" value="ECO:0007669"/>
    <property type="project" value="InterPro"/>
</dbReference>
<dbReference type="CDD" id="cd11733">
    <property type="entry name" value="ASKHA_NBD_HSP70_HSPA9"/>
    <property type="match status" value="1"/>
</dbReference>
<dbReference type="FunFam" id="2.60.34.10:FF:000014">
    <property type="entry name" value="Chaperone protein DnaK HSP70"/>
    <property type="match status" value="1"/>
</dbReference>
<dbReference type="FunFam" id="3.30.420.40:FF:000020">
    <property type="entry name" value="Chaperone protein HscA homolog"/>
    <property type="match status" value="1"/>
</dbReference>
<dbReference type="FunFam" id="1.20.1270.10:FF:000001">
    <property type="entry name" value="Molecular chaperone DnaK"/>
    <property type="match status" value="1"/>
</dbReference>
<dbReference type="FunFam" id="3.30.420.40:FF:000004">
    <property type="entry name" value="Molecular chaperone DnaK"/>
    <property type="match status" value="1"/>
</dbReference>
<dbReference type="FunFam" id="3.90.640.10:FF:000003">
    <property type="entry name" value="Molecular chaperone DnaK"/>
    <property type="match status" value="1"/>
</dbReference>
<dbReference type="Gene3D" id="1.20.1270.10">
    <property type="match status" value="1"/>
</dbReference>
<dbReference type="Gene3D" id="3.30.420.40">
    <property type="match status" value="2"/>
</dbReference>
<dbReference type="Gene3D" id="3.90.640.10">
    <property type="entry name" value="Actin, Chain A, domain 4"/>
    <property type="match status" value="1"/>
</dbReference>
<dbReference type="Gene3D" id="2.60.34.10">
    <property type="entry name" value="Substrate Binding Domain Of DNAk, Chain A, domain 1"/>
    <property type="match status" value="1"/>
</dbReference>
<dbReference type="HAMAP" id="MF_00332">
    <property type="entry name" value="DnaK"/>
    <property type="match status" value="1"/>
</dbReference>
<dbReference type="InterPro" id="IPR043129">
    <property type="entry name" value="ATPase_NBD"/>
</dbReference>
<dbReference type="InterPro" id="IPR012725">
    <property type="entry name" value="Chaperone_DnaK"/>
</dbReference>
<dbReference type="InterPro" id="IPR018181">
    <property type="entry name" value="Heat_shock_70_CS"/>
</dbReference>
<dbReference type="InterPro" id="IPR029048">
    <property type="entry name" value="HSP70_C_sf"/>
</dbReference>
<dbReference type="InterPro" id="IPR029047">
    <property type="entry name" value="HSP70_peptide-bd_sf"/>
</dbReference>
<dbReference type="InterPro" id="IPR013126">
    <property type="entry name" value="Hsp_70_fam"/>
</dbReference>
<dbReference type="NCBIfam" id="NF001413">
    <property type="entry name" value="PRK00290.1"/>
    <property type="match status" value="1"/>
</dbReference>
<dbReference type="NCBIfam" id="NF003520">
    <property type="entry name" value="PRK05183.1"/>
    <property type="match status" value="1"/>
</dbReference>
<dbReference type="NCBIfam" id="TIGR02350">
    <property type="entry name" value="prok_dnaK"/>
    <property type="match status" value="1"/>
</dbReference>
<dbReference type="PANTHER" id="PTHR19375">
    <property type="entry name" value="HEAT SHOCK PROTEIN 70KDA"/>
    <property type="match status" value="1"/>
</dbReference>
<dbReference type="Pfam" id="PF00012">
    <property type="entry name" value="HSP70"/>
    <property type="match status" value="1"/>
</dbReference>
<dbReference type="PRINTS" id="PR00301">
    <property type="entry name" value="HEATSHOCK70"/>
</dbReference>
<dbReference type="SUPFAM" id="SSF53067">
    <property type="entry name" value="Actin-like ATPase domain"/>
    <property type="match status" value="2"/>
</dbReference>
<dbReference type="SUPFAM" id="SSF100934">
    <property type="entry name" value="Heat shock protein 70kD (HSP70), C-terminal subdomain"/>
    <property type="match status" value="1"/>
</dbReference>
<dbReference type="SUPFAM" id="SSF100920">
    <property type="entry name" value="Heat shock protein 70kD (HSP70), peptide-binding domain"/>
    <property type="match status" value="1"/>
</dbReference>
<dbReference type="PROSITE" id="PS00297">
    <property type="entry name" value="HSP70_1"/>
    <property type="match status" value="1"/>
</dbReference>
<dbReference type="PROSITE" id="PS00329">
    <property type="entry name" value="HSP70_2"/>
    <property type="match status" value="1"/>
</dbReference>
<dbReference type="PROSITE" id="PS01036">
    <property type="entry name" value="HSP70_3"/>
    <property type="match status" value="1"/>
</dbReference>
<accession>Q21CI2</accession>
<evidence type="ECO:0000255" key="1">
    <source>
        <dbReference type="HAMAP-Rule" id="MF_00332"/>
    </source>
</evidence>
<keyword id="KW-0067">ATP-binding</keyword>
<keyword id="KW-0143">Chaperone</keyword>
<keyword id="KW-0547">Nucleotide-binding</keyword>
<keyword id="KW-0597">Phosphoprotein</keyword>
<keyword id="KW-0346">Stress response</keyword>
<organism>
    <name type="scientific">Rhodopseudomonas palustris (strain BisB18)</name>
    <dbReference type="NCBI Taxonomy" id="316056"/>
    <lineage>
        <taxon>Bacteria</taxon>
        <taxon>Pseudomonadati</taxon>
        <taxon>Pseudomonadota</taxon>
        <taxon>Alphaproteobacteria</taxon>
        <taxon>Hyphomicrobiales</taxon>
        <taxon>Nitrobacteraceae</taxon>
        <taxon>Rhodopseudomonas</taxon>
    </lineage>
</organism>
<proteinExistence type="inferred from homology"/>
<name>DNAK_RHOPB</name>
<protein>
    <recommendedName>
        <fullName evidence="1">Chaperone protein DnaK</fullName>
    </recommendedName>
    <alternativeName>
        <fullName evidence="1">HSP70</fullName>
    </alternativeName>
    <alternativeName>
        <fullName evidence="1">Heat shock 70 kDa protein</fullName>
    </alternativeName>
    <alternativeName>
        <fullName evidence="1">Heat shock protein 70</fullName>
    </alternativeName>
</protein>